<keyword id="KW-0050">Antiport</keyword>
<keyword id="KW-0106">Calcium</keyword>
<keyword id="KW-0472">Membrane</keyword>
<keyword id="KW-0479">Metal-binding</keyword>
<keyword id="KW-0496">Mitochondrion</keyword>
<keyword id="KW-0999">Mitochondrion inner membrane</keyword>
<keyword id="KW-1185">Reference proteome</keyword>
<keyword id="KW-0677">Repeat</keyword>
<keyword id="KW-0812">Transmembrane</keyword>
<keyword id="KW-1133">Transmembrane helix</keyword>
<keyword id="KW-0813">Transport</keyword>
<comment type="function">
    <text evidence="2">Electroneutral antiporter that mediates the transport of adenine nucleotides through the inner mitochondrial membrane. Originally identified as an ATP-magnesium/inorganic phosphate antiporter, it also acts as a broad specificity adenyl nucleotide antiporter. By regulating the mitochondrial matrix adenine nucleotide pool could adapt to changing cellular energetic demands and indirectly regulate adenine nucleotide-dependent metabolic pathways. Also acts as a regulator of mitochondrial calcium uptake and can probably transport trace amounts of other divalent metal cations in complex with ATP. In vitro, a low activity is also observed with guanyl and pyrimidine nucleotides.</text>
</comment>
<comment type="catalytic activity">
    <reaction evidence="2">
        <text>Mg(2+)(out) + phosphate(in) + ATP(out) = Mg(2+)(in) + phosphate(out) + ATP(in)</text>
        <dbReference type="Rhea" id="RHEA:65840"/>
        <dbReference type="ChEBI" id="CHEBI:18420"/>
        <dbReference type="ChEBI" id="CHEBI:30616"/>
        <dbReference type="ChEBI" id="CHEBI:43474"/>
    </reaction>
</comment>
<comment type="catalytic activity">
    <reaction evidence="2">
        <text>ADP(out) + phosphate(in) + H(+)(out) = ADP(in) + phosphate(out) + H(+)(in)</text>
        <dbReference type="Rhea" id="RHEA:65844"/>
        <dbReference type="ChEBI" id="CHEBI:15378"/>
        <dbReference type="ChEBI" id="CHEBI:43474"/>
        <dbReference type="ChEBI" id="CHEBI:456216"/>
    </reaction>
</comment>
<comment type="catalytic activity">
    <reaction evidence="2">
        <text>AMP(out) + phosphate(in) = AMP(in) + phosphate(out)</text>
        <dbReference type="Rhea" id="RHEA:70259"/>
        <dbReference type="ChEBI" id="CHEBI:43474"/>
        <dbReference type="ChEBI" id="CHEBI:456215"/>
    </reaction>
</comment>
<comment type="catalytic activity">
    <reaction evidence="2">
        <text>phosphate(in) + ATP(out) + 2 H(+)(out) = phosphate(out) + ATP(in) + 2 H(+)(in)</text>
        <dbReference type="Rhea" id="RHEA:72035"/>
        <dbReference type="ChEBI" id="CHEBI:15378"/>
        <dbReference type="ChEBI" id="CHEBI:30616"/>
        <dbReference type="ChEBI" id="CHEBI:43474"/>
    </reaction>
</comment>
<comment type="catalytic activity">
    <reaction evidence="2">
        <text>dADP(in) + ADP(out) = dADP(out) + ADP(in)</text>
        <dbReference type="Rhea" id="RHEA:72855"/>
        <dbReference type="ChEBI" id="CHEBI:57667"/>
        <dbReference type="ChEBI" id="CHEBI:456216"/>
    </reaction>
</comment>
<comment type="catalytic activity">
    <reaction evidence="2">
        <text>Mg(2+)(in) + ADP(out) + ATP(in) + H(+)(out) = Mg(2+)(out) + ADP(in) + ATP(out) + H(+)(in)</text>
        <dbReference type="Rhea" id="RHEA:73659"/>
        <dbReference type="ChEBI" id="CHEBI:15378"/>
        <dbReference type="ChEBI" id="CHEBI:18420"/>
        <dbReference type="ChEBI" id="CHEBI:30616"/>
        <dbReference type="ChEBI" id="CHEBI:456216"/>
    </reaction>
</comment>
<comment type="catalytic activity">
    <reaction evidence="2">
        <text>ADP(out) + diphosphate(in) = ADP(in) + diphosphate(out)</text>
        <dbReference type="Rhea" id="RHEA:73671"/>
        <dbReference type="ChEBI" id="CHEBI:33019"/>
        <dbReference type="ChEBI" id="CHEBI:456216"/>
    </reaction>
</comment>
<comment type="catalytic activity">
    <reaction evidence="2">
        <text>dAMP(in) + ADP(out) + H(+)(out) = dAMP(out) + ADP(in) + H(+)(in)</text>
        <dbReference type="Rhea" id="RHEA:73675"/>
        <dbReference type="ChEBI" id="CHEBI:15378"/>
        <dbReference type="ChEBI" id="CHEBI:58245"/>
        <dbReference type="ChEBI" id="CHEBI:456216"/>
    </reaction>
</comment>
<comment type="catalytic activity">
    <reaction evidence="2">
        <text>3'-AMP(in) + ADP(out) + H(+)(out) = 3'-AMP(out) + ADP(in) + H(+)(in)</text>
        <dbReference type="Rhea" id="RHEA:73679"/>
        <dbReference type="ChEBI" id="CHEBI:15378"/>
        <dbReference type="ChEBI" id="CHEBI:60880"/>
        <dbReference type="ChEBI" id="CHEBI:456216"/>
    </reaction>
</comment>
<comment type="catalytic activity">
    <reaction evidence="2">
        <text>dAMP(out) + phosphate(in) = dAMP(in) + phosphate(out)</text>
        <dbReference type="Rhea" id="RHEA:73687"/>
        <dbReference type="ChEBI" id="CHEBI:43474"/>
        <dbReference type="ChEBI" id="CHEBI:58245"/>
    </reaction>
</comment>
<comment type="catalytic activity">
    <reaction evidence="2">
        <text>3'-AMP(out) + phosphate(in) = 3'-AMP(in) + phosphate(out)</text>
        <dbReference type="Rhea" id="RHEA:73691"/>
        <dbReference type="ChEBI" id="CHEBI:43474"/>
        <dbReference type="ChEBI" id="CHEBI:60880"/>
    </reaction>
</comment>
<comment type="catalytic activity">
    <reaction evidence="2">
        <text>dADP(out) + phosphate(in) + H(+)(out) = dADP(in) + phosphate(out) + H(+)(in)</text>
        <dbReference type="Rhea" id="RHEA:73695"/>
        <dbReference type="ChEBI" id="CHEBI:15378"/>
        <dbReference type="ChEBI" id="CHEBI:43474"/>
        <dbReference type="ChEBI" id="CHEBI:57667"/>
    </reaction>
</comment>
<comment type="activity regulation">
    <text evidence="1">Activated by an increase in cytosolic calcium levels that induce a conformational change of the N-terminal regulatory domain, uncapping the channel and allowing transport.</text>
</comment>
<comment type="subunit">
    <text evidence="2">Interacts with MCU. Interacts with MICU1.</text>
</comment>
<comment type="subcellular location">
    <subcellularLocation>
        <location evidence="9">Mitochondrion inner membrane</location>
        <topology evidence="3">Multi-pass membrane protein</topology>
    </subcellularLocation>
</comment>
<comment type="domain">
    <text evidence="1">The regulatory N-terminal domain/NTD, binds calcium in the mitochondrial intermembrane space and regulates the antiporter activity of the transmembrane domain/TMD. In absence of calcium, the apo form of the N-terminal domain is intrinsically disordered and binds to the transmembrane domain, inhibiting the transporter activity. Binding of calcium leads to a major conformational change and abolishes the interaction with the transmembrane domain and the inhibition of the transporter activity.</text>
</comment>
<comment type="domain">
    <text evidence="1">The C-terminal mitochondrial carrier domain/transmembrane domain/TMD bears the transmembrane transporter activity.</text>
</comment>
<comment type="domain">
    <text evidence="1">Linker region/H9 could directly block the transport of substrates across the transporter.</text>
</comment>
<comment type="similarity">
    <text evidence="8">Belongs to the mitochondrial carrier (TC 2.A.29) family.</text>
</comment>
<evidence type="ECO:0000250" key="1">
    <source>
        <dbReference type="UniProtKB" id="Q6NUK1"/>
    </source>
</evidence>
<evidence type="ECO:0000250" key="2">
    <source>
        <dbReference type="UniProtKB" id="Q9BV35"/>
    </source>
</evidence>
<evidence type="ECO:0000255" key="3"/>
<evidence type="ECO:0000255" key="4">
    <source>
        <dbReference type="PROSITE-ProRule" id="PRU00282"/>
    </source>
</evidence>
<evidence type="ECO:0000255" key="5">
    <source>
        <dbReference type="PROSITE-ProRule" id="PRU00448"/>
    </source>
</evidence>
<evidence type="ECO:0000256" key="6">
    <source>
        <dbReference type="SAM" id="MobiDB-lite"/>
    </source>
</evidence>
<evidence type="ECO:0000303" key="7">
    <source>
    </source>
</evidence>
<evidence type="ECO:0000305" key="8"/>
<evidence type="ECO:0000305" key="9">
    <source>
    </source>
</evidence>
<evidence type="ECO:0000312" key="10">
    <source>
        <dbReference type="MGI" id="MGI:1914222"/>
    </source>
</evidence>
<accession>Q6GQS1</accession>
<gene>
    <name evidence="10" type="primary">Slc25a23</name>
    <name type="synonym">Scamc3</name>
</gene>
<sequence>MRGGSSDAERRQRWGRLFEELDSNKDGRVDVHELRQGLARLGRGDPDRAQQGVSSDWDADPDGGLSLEEFTRYLQEREQRLLLMFHSLDRNQDGHIDVSEIQQSFRALGISISLEQAEKILHSMDRDGTMTIDWQEWRDHFLLHSLENVEDVLYFWKHSTVLDIGECLTVPDEFSQEEKLTGMWWKQLVAGAVAGAVSRTGTAPLDRLKVFMQVHASKSNRLNILGGLRNMIQEGGVLSLWRGNGINVLKIAPESAIKFMAYEQIKRAIRGQQETLHVQERFVAGSLAGATAQTIIYPMEVLKTRLTLRRTGQYKGLLDCAKRILEREGPRAFYRGYLPNVLGIIPYAGIDLAVYETLKNRWLQQYSHESANPGILVLLGCGTISSTCGQIASYPLALVRTRMQAQASIEGGPQVSMVGLLRHILSQEGVWGLYRGIAPNFMKVIPAVSISYVVYENMKQALGVTSR</sequence>
<organism>
    <name type="scientific">Mus musculus</name>
    <name type="common">Mouse</name>
    <dbReference type="NCBI Taxonomy" id="10090"/>
    <lineage>
        <taxon>Eukaryota</taxon>
        <taxon>Metazoa</taxon>
        <taxon>Chordata</taxon>
        <taxon>Craniata</taxon>
        <taxon>Vertebrata</taxon>
        <taxon>Euteleostomi</taxon>
        <taxon>Mammalia</taxon>
        <taxon>Eutheria</taxon>
        <taxon>Euarchontoglires</taxon>
        <taxon>Glires</taxon>
        <taxon>Rodentia</taxon>
        <taxon>Myomorpha</taxon>
        <taxon>Muroidea</taxon>
        <taxon>Muridae</taxon>
        <taxon>Murinae</taxon>
        <taxon>Mus</taxon>
        <taxon>Mus</taxon>
    </lineage>
</organism>
<dbReference type="EMBL" id="BC072660">
    <property type="protein sequence ID" value="AAH72660.1"/>
    <property type="molecule type" value="mRNA"/>
</dbReference>
<dbReference type="CCDS" id="CCDS28923.1"/>
<dbReference type="RefSeq" id="NP_080153.2">
    <property type="nucleotide sequence ID" value="NM_025877.4"/>
</dbReference>
<dbReference type="SMR" id="Q6GQS1"/>
<dbReference type="BioGRID" id="211846">
    <property type="interactions" value="8"/>
</dbReference>
<dbReference type="FunCoup" id="Q6GQS1">
    <property type="interactions" value="1851"/>
</dbReference>
<dbReference type="STRING" id="10090.ENSMUSP00000040198"/>
<dbReference type="GlyGen" id="Q6GQS1">
    <property type="glycosylation" value="1 site, 1 O-linked glycan (1 site)"/>
</dbReference>
<dbReference type="PhosphoSitePlus" id="Q6GQS1"/>
<dbReference type="PaxDb" id="10090-ENSMUSP00000040198"/>
<dbReference type="PeptideAtlas" id="Q6GQS1"/>
<dbReference type="ProteomicsDB" id="255361"/>
<dbReference type="Antibodypedia" id="24155">
    <property type="antibodies" value="96 antibodies from 20 providers"/>
</dbReference>
<dbReference type="DNASU" id="66972"/>
<dbReference type="Ensembl" id="ENSMUST00000040280.14">
    <property type="protein sequence ID" value="ENSMUSP00000040198.8"/>
    <property type="gene ID" value="ENSMUSG00000046329.15"/>
</dbReference>
<dbReference type="GeneID" id="66972"/>
<dbReference type="KEGG" id="mmu:66972"/>
<dbReference type="UCSC" id="uc008ddu.2">
    <property type="organism name" value="mouse"/>
</dbReference>
<dbReference type="AGR" id="MGI:1914222"/>
<dbReference type="CTD" id="79085"/>
<dbReference type="MGI" id="MGI:1914222">
    <property type="gene designation" value="Slc25a23"/>
</dbReference>
<dbReference type="VEuPathDB" id="HostDB:ENSMUSG00000046329"/>
<dbReference type="eggNOG" id="KOG0036">
    <property type="taxonomic scope" value="Eukaryota"/>
</dbReference>
<dbReference type="GeneTree" id="ENSGT00940000159428"/>
<dbReference type="HOGENOM" id="CLU_015166_2_0_1"/>
<dbReference type="InParanoid" id="Q6GQS1"/>
<dbReference type="OMA" id="MFHSLDH"/>
<dbReference type="OrthoDB" id="270584at2759"/>
<dbReference type="PhylomeDB" id="Q6GQS1"/>
<dbReference type="TreeFam" id="TF313492"/>
<dbReference type="BioGRID-ORCS" id="66972">
    <property type="hits" value="2 hits in 77 CRISPR screens"/>
</dbReference>
<dbReference type="ChiTaRS" id="Slc25a23">
    <property type="organism name" value="mouse"/>
</dbReference>
<dbReference type="PRO" id="PR:Q6GQS1"/>
<dbReference type="Proteomes" id="UP000000589">
    <property type="component" value="Chromosome 17"/>
</dbReference>
<dbReference type="RNAct" id="Q6GQS1">
    <property type="molecule type" value="protein"/>
</dbReference>
<dbReference type="Bgee" id="ENSMUSG00000046329">
    <property type="expression patterns" value="Expressed in superior frontal gyrus and 233 other cell types or tissues"/>
</dbReference>
<dbReference type="ExpressionAtlas" id="Q6GQS1">
    <property type="expression patterns" value="baseline and differential"/>
</dbReference>
<dbReference type="GO" id="GO:0005743">
    <property type="term" value="C:mitochondrial inner membrane"/>
    <property type="evidence" value="ECO:0007669"/>
    <property type="project" value="UniProtKB-SubCell"/>
</dbReference>
<dbReference type="GO" id="GO:0005739">
    <property type="term" value="C:mitochondrion"/>
    <property type="evidence" value="ECO:0000314"/>
    <property type="project" value="UniProtKB"/>
</dbReference>
<dbReference type="GO" id="GO:0000295">
    <property type="term" value="F:adenine nucleotide transmembrane transporter activity"/>
    <property type="evidence" value="ECO:0000250"/>
    <property type="project" value="UniProtKB"/>
</dbReference>
<dbReference type="GO" id="GO:0140988">
    <property type="term" value="F:ADP:phosphate antiporter activity"/>
    <property type="evidence" value="ECO:0000250"/>
    <property type="project" value="UniProtKB"/>
</dbReference>
<dbReference type="GO" id="GO:0140987">
    <property type="term" value="F:ATP:phosphate antiporter activity"/>
    <property type="evidence" value="ECO:0000250"/>
    <property type="project" value="UniProtKB"/>
</dbReference>
<dbReference type="GO" id="GO:0005509">
    <property type="term" value="F:calcium ion binding"/>
    <property type="evidence" value="ECO:0007669"/>
    <property type="project" value="InterPro"/>
</dbReference>
<dbReference type="GO" id="GO:0051503">
    <property type="term" value="P:adenine nucleotide transport"/>
    <property type="evidence" value="ECO:0000315"/>
    <property type="project" value="MGI"/>
</dbReference>
<dbReference type="GO" id="GO:0036444">
    <property type="term" value="P:calcium import into the mitochondrion"/>
    <property type="evidence" value="ECO:0000250"/>
    <property type="project" value="UniProtKB"/>
</dbReference>
<dbReference type="GO" id="GO:0071277">
    <property type="term" value="P:cellular response to calcium ion"/>
    <property type="evidence" value="ECO:0000315"/>
    <property type="project" value="MGI"/>
</dbReference>
<dbReference type="GO" id="GO:1990544">
    <property type="term" value="P:mitochondrial ATP transmembrane transport"/>
    <property type="evidence" value="ECO:0000250"/>
    <property type="project" value="UniProtKB"/>
</dbReference>
<dbReference type="GO" id="GO:0006851">
    <property type="term" value="P:mitochondrial calcium ion transmembrane transport"/>
    <property type="evidence" value="ECO:0000250"/>
    <property type="project" value="UniProtKB"/>
</dbReference>
<dbReference type="GO" id="GO:0051561">
    <property type="term" value="P:positive regulation of mitochondrial calcium ion concentration"/>
    <property type="evidence" value="ECO:0000250"/>
    <property type="project" value="UniProtKB"/>
</dbReference>
<dbReference type="GO" id="GO:1900069">
    <property type="term" value="P:regulation of cellular hyperosmotic salinity response"/>
    <property type="evidence" value="ECO:0000250"/>
    <property type="project" value="UniProtKB"/>
</dbReference>
<dbReference type="GO" id="GO:0043457">
    <property type="term" value="P:regulation of cellular respiration"/>
    <property type="evidence" value="ECO:0000315"/>
    <property type="project" value="MGI"/>
</dbReference>
<dbReference type="GO" id="GO:0002082">
    <property type="term" value="P:regulation of oxidative phosphorylation"/>
    <property type="evidence" value="ECO:0000315"/>
    <property type="project" value="MGI"/>
</dbReference>
<dbReference type="GO" id="GO:0051282">
    <property type="term" value="P:regulation of sequestering of calcium ion"/>
    <property type="evidence" value="ECO:0000315"/>
    <property type="project" value="MGI"/>
</dbReference>
<dbReference type="GO" id="GO:0003014">
    <property type="term" value="P:renal system process"/>
    <property type="evidence" value="ECO:0000315"/>
    <property type="project" value="MGI"/>
</dbReference>
<dbReference type="CDD" id="cd00051">
    <property type="entry name" value="EFh"/>
    <property type="match status" value="1"/>
</dbReference>
<dbReference type="FunFam" id="1.10.238.10:FF:000190">
    <property type="entry name" value="calcium-binding mitochondrial carrier protein SCaMC-3 isoform X2"/>
    <property type="match status" value="1"/>
</dbReference>
<dbReference type="FunFam" id="1.10.238.10:FF:000028">
    <property type="entry name" value="Putative calcium-binding mitochondrial carrier protein scamc-2"/>
    <property type="match status" value="1"/>
</dbReference>
<dbReference type="FunFam" id="1.50.40.10:FF:000003">
    <property type="entry name" value="Putative calcium-binding mitochondrial carrier protein scamc-2"/>
    <property type="match status" value="1"/>
</dbReference>
<dbReference type="Gene3D" id="1.10.238.10">
    <property type="entry name" value="EF-hand"/>
    <property type="match status" value="2"/>
</dbReference>
<dbReference type="Gene3D" id="1.50.40.10">
    <property type="entry name" value="Mitochondrial carrier domain"/>
    <property type="match status" value="1"/>
</dbReference>
<dbReference type="InterPro" id="IPR011992">
    <property type="entry name" value="EF-hand-dom_pair"/>
</dbReference>
<dbReference type="InterPro" id="IPR018247">
    <property type="entry name" value="EF_Hand_1_Ca_BS"/>
</dbReference>
<dbReference type="InterPro" id="IPR002048">
    <property type="entry name" value="EF_hand_dom"/>
</dbReference>
<dbReference type="InterPro" id="IPR002067">
    <property type="entry name" value="Mit_carrier"/>
</dbReference>
<dbReference type="InterPro" id="IPR018108">
    <property type="entry name" value="Mitochondrial_sb/sol_carrier"/>
</dbReference>
<dbReference type="InterPro" id="IPR023395">
    <property type="entry name" value="Mt_carrier_dom_sf"/>
</dbReference>
<dbReference type="PANTHER" id="PTHR24089">
    <property type="entry name" value="SOLUTE CARRIER FAMILY 25"/>
    <property type="match status" value="1"/>
</dbReference>
<dbReference type="Pfam" id="PF13499">
    <property type="entry name" value="EF-hand_7"/>
    <property type="match status" value="2"/>
</dbReference>
<dbReference type="Pfam" id="PF00153">
    <property type="entry name" value="Mito_carr"/>
    <property type="match status" value="3"/>
</dbReference>
<dbReference type="PRINTS" id="PR00926">
    <property type="entry name" value="MITOCARRIER"/>
</dbReference>
<dbReference type="SMART" id="SM00054">
    <property type="entry name" value="EFh"/>
    <property type="match status" value="3"/>
</dbReference>
<dbReference type="SUPFAM" id="SSF47473">
    <property type="entry name" value="EF-hand"/>
    <property type="match status" value="1"/>
</dbReference>
<dbReference type="SUPFAM" id="SSF103506">
    <property type="entry name" value="Mitochondrial carrier"/>
    <property type="match status" value="1"/>
</dbReference>
<dbReference type="PROSITE" id="PS00018">
    <property type="entry name" value="EF_HAND_1"/>
    <property type="match status" value="2"/>
</dbReference>
<dbReference type="PROSITE" id="PS50222">
    <property type="entry name" value="EF_HAND_2"/>
    <property type="match status" value="3"/>
</dbReference>
<dbReference type="PROSITE" id="PS50920">
    <property type="entry name" value="SOLCAR"/>
    <property type="match status" value="3"/>
</dbReference>
<reference key="1">
    <citation type="journal article" date="2004" name="Genome Res.">
        <title>The status, quality, and expansion of the NIH full-length cDNA project: the Mammalian Gene Collection (MGC).</title>
        <authorList>
            <consortium name="The MGC Project Team"/>
        </authorList>
    </citation>
    <scope>NUCLEOTIDE SEQUENCE [LARGE SCALE MRNA]</scope>
    <source>
        <strain>C57BL/6J</strain>
        <tissue>Brain</tissue>
    </source>
</reference>
<reference key="2">
    <citation type="journal article" date="2010" name="Cell">
        <title>A tissue-specific atlas of mouse protein phosphorylation and expression.</title>
        <authorList>
            <person name="Huttlin E.L."/>
            <person name="Jedrychowski M.P."/>
            <person name="Elias J.E."/>
            <person name="Goswami T."/>
            <person name="Rad R."/>
            <person name="Beausoleil S.A."/>
            <person name="Villen J."/>
            <person name="Haas W."/>
            <person name="Sowa M.E."/>
            <person name="Gygi S.P."/>
        </authorList>
    </citation>
    <scope>IDENTIFICATION BY MASS SPECTROMETRY [LARGE SCALE ANALYSIS]</scope>
    <source>
        <tissue>Kidney</tissue>
    </source>
</reference>
<reference key="3">
    <citation type="journal article" date="2004" name="J. Biol. Chem.">
        <title>Identification of a novel human subfamily of mitochondrial carriers with calcium-binding domains.</title>
        <authorList>
            <person name="del Arco A."/>
            <person name="Satrustegui J."/>
        </authorList>
    </citation>
    <scope>SUBCELLULAR LOCATION</scope>
</reference>
<protein>
    <recommendedName>
        <fullName evidence="2">Mitochondrial adenyl nucleotide antiporter SLC25A23</fullName>
    </recommendedName>
    <alternativeName>
        <fullName evidence="7">Short calcium-binding mitochondrial carrier protein 3</fullName>
        <shortName evidence="7">SCaMC-3</shortName>
    </alternativeName>
    <alternativeName>
        <fullName evidence="10">Solute carrier family 25 member 23</fullName>
    </alternativeName>
</protein>
<feature type="chain" id="PRO_0000317610" description="Mitochondrial adenyl nucleotide antiporter SLC25A23">
    <location>
        <begin position="1"/>
        <end position="467"/>
    </location>
</feature>
<feature type="topological domain" description="Mitochondrial intermembrane" evidence="2">
    <location>
        <begin position="1"/>
        <end position="187"/>
    </location>
</feature>
<feature type="transmembrane region" description="Helical; Name=1" evidence="3">
    <location>
        <begin position="188"/>
        <end position="205"/>
    </location>
</feature>
<feature type="topological domain" description="Mitochondrial matrix" evidence="2">
    <location>
        <begin position="206"/>
        <end position="242"/>
    </location>
</feature>
<feature type="transmembrane region" description="Helical; Name=2" evidence="3">
    <location>
        <begin position="243"/>
        <end position="262"/>
    </location>
</feature>
<feature type="topological domain" description="Mitochondrial intermembrane" evidence="2">
    <location>
        <begin position="263"/>
        <end position="285"/>
    </location>
</feature>
<feature type="transmembrane region" description="Helical; Name=3" evidence="3">
    <location>
        <begin position="286"/>
        <end position="299"/>
    </location>
</feature>
<feature type="topological domain" description="Mitochondrial matrix" evidence="2">
    <location>
        <begin position="300"/>
        <end position="335"/>
    </location>
</feature>
<feature type="transmembrane region" description="Helical; Name=4" evidence="3">
    <location>
        <begin position="336"/>
        <end position="355"/>
    </location>
</feature>
<feature type="topological domain" description="Mitochondrial intermembrane" evidence="2">
    <location>
        <begin position="356"/>
        <end position="378"/>
    </location>
</feature>
<feature type="transmembrane region" description="Helical; Name=5" evidence="3">
    <location>
        <begin position="379"/>
        <end position="396"/>
    </location>
</feature>
<feature type="topological domain" description="Mitochondrial matrix" evidence="2">
    <location>
        <begin position="397"/>
        <end position="435"/>
    </location>
</feature>
<feature type="transmembrane region" description="Helical; Name=6" evidence="3">
    <location>
        <begin position="436"/>
        <end position="455"/>
    </location>
</feature>
<feature type="topological domain" description="Mitochondrial intermembrane" evidence="2">
    <location>
        <begin position="456"/>
        <end position="467"/>
    </location>
</feature>
<feature type="domain" description="EF-hand 1" evidence="5">
    <location>
        <begin position="9"/>
        <end position="44"/>
    </location>
</feature>
<feature type="domain" description="EF-hand 2" evidence="5">
    <location>
        <begin position="76"/>
        <end position="111"/>
    </location>
</feature>
<feature type="domain" description="EF-hand 3" evidence="5">
    <location>
        <begin position="112"/>
        <end position="147"/>
    </location>
</feature>
<feature type="repeat" description="Solcar 1" evidence="4">
    <location>
        <begin position="182"/>
        <end position="268"/>
    </location>
</feature>
<feature type="repeat" description="Solcar 2" evidence="4">
    <location>
        <begin position="276"/>
        <end position="361"/>
    </location>
</feature>
<feature type="repeat" description="Solcar 3" evidence="4">
    <location>
        <begin position="373"/>
        <end position="461"/>
    </location>
</feature>
<feature type="region of interest" description="Regulatory N-terminal domain" evidence="1">
    <location>
        <begin position="1"/>
        <end position="148"/>
    </location>
</feature>
<feature type="region of interest" description="Disordered" evidence="6">
    <location>
        <begin position="39"/>
        <end position="61"/>
    </location>
</feature>
<feature type="region of interest" description="Linker region" evidence="1">
    <location>
        <begin position="149"/>
        <end position="158"/>
    </location>
</feature>
<feature type="region of interest" description="C-terminal transmembrane transporter domain" evidence="1">
    <location>
        <begin position="164"/>
        <end position="467"/>
    </location>
</feature>
<feature type="binding site" evidence="5">
    <location>
        <position position="22"/>
    </location>
    <ligand>
        <name>Ca(2+)</name>
        <dbReference type="ChEBI" id="CHEBI:29108"/>
        <label>1</label>
    </ligand>
</feature>
<feature type="binding site" evidence="5">
    <location>
        <position position="24"/>
    </location>
    <ligand>
        <name>Ca(2+)</name>
        <dbReference type="ChEBI" id="CHEBI:29108"/>
        <label>1</label>
    </ligand>
</feature>
<feature type="binding site" evidence="5">
    <location>
        <position position="26"/>
    </location>
    <ligand>
        <name>Ca(2+)</name>
        <dbReference type="ChEBI" id="CHEBI:29108"/>
        <label>1</label>
    </ligand>
</feature>
<feature type="binding site" evidence="5">
    <location>
        <position position="28"/>
    </location>
    <ligand>
        <name>Ca(2+)</name>
        <dbReference type="ChEBI" id="CHEBI:29108"/>
        <label>1</label>
    </ligand>
</feature>
<feature type="binding site" evidence="5">
    <location>
        <position position="33"/>
    </location>
    <ligand>
        <name>Ca(2+)</name>
        <dbReference type="ChEBI" id="CHEBI:29108"/>
        <label>1</label>
    </ligand>
</feature>
<feature type="binding site" evidence="5">
    <location>
        <position position="89"/>
    </location>
    <ligand>
        <name>Ca(2+)</name>
        <dbReference type="ChEBI" id="CHEBI:29108"/>
        <label>2</label>
    </ligand>
</feature>
<feature type="binding site" evidence="5">
    <location>
        <position position="91"/>
    </location>
    <ligand>
        <name>Ca(2+)</name>
        <dbReference type="ChEBI" id="CHEBI:29108"/>
        <label>2</label>
    </ligand>
</feature>
<feature type="binding site" evidence="5">
    <location>
        <position position="93"/>
    </location>
    <ligand>
        <name>Ca(2+)</name>
        <dbReference type="ChEBI" id="CHEBI:29108"/>
        <label>2</label>
    </ligand>
</feature>
<feature type="binding site" evidence="5">
    <location>
        <position position="95"/>
    </location>
    <ligand>
        <name>Ca(2+)</name>
        <dbReference type="ChEBI" id="CHEBI:29108"/>
        <label>2</label>
    </ligand>
</feature>
<feature type="binding site" evidence="5">
    <location>
        <position position="100"/>
    </location>
    <ligand>
        <name>Ca(2+)</name>
        <dbReference type="ChEBI" id="CHEBI:29108"/>
        <label>2</label>
    </ligand>
</feature>
<proteinExistence type="evidence at protein level"/>
<name>SCMC3_MOUSE</name>